<gene>
    <name type="primary">ATG12</name>
    <name type="synonym">APG12</name>
    <name type="ORF">SCY_0427</name>
</gene>
<organism>
    <name type="scientific">Saccharomyces cerevisiae (strain YJM789)</name>
    <name type="common">Baker's yeast</name>
    <dbReference type="NCBI Taxonomy" id="307796"/>
    <lineage>
        <taxon>Eukaryota</taxon>
        <taxon>Fungi</taxon>
        <taxon>Dikarya</taxon>
        <taxon>Ascomycota</taxon>
        <taxon>Saccharomycotina</taxon>
        <taxon>Saccharomycetes</taxon>
        <taxon>Saccharomycetales</taxon>
        <taxon>Saccharomycetaceae</taxon>
        <taxon>Saccharomyces</taxon>
    </lineage>
</organism>
<reference key="1">
    <citation type="journal article" date="2007" name="Proc. Natl. Acad. Sci. U.S.A.">
        <title>Genome sequencing and comparative analysis of Saccharomyces cerevisiae strain YJM789.</title>
        <authorList>
            <person name="Wei W."/>
            <person name="McCusker J.H."/>
            <person name="Hyman R.W."/>
            <person name="Jones T."/>
            <person name="Ning Y."/>
            <person name="Cao Z."/>
            <person name="Gu Z."/>
            <person name="Bruno D."/>
            <person name="Miranda M."/>
            <person name="Nguyen M."/>
            <person name="Wilhelmy J."/>
            <person name="Komp C."/>
            <person name="Tamse R."/>
            <person name="Wang X."/>
            <person name="Jia P."/>
            <person name="Luedi P."/>
            <person name="Oefner P.J."/>
            <person name="David L."/>
            <person name="Dietrich F.S."/>
            <person name="Li Y."/>
            <person name="Davis R.W."/>
            <person name="Steinmetz L.M."/>
        </authorList>
    </citation>
    <scope>NUCLEOTIDE SEQUENCE [LARGE SCALE GENOMIC DNA]</scope>
    <source>
        <strain>YJM789</strain>
    </source>
</reference>
<evidence type="ECO:0000250" key="1"/>
<evidence type="ECO:0000256" key="2">
    <source>
        <dbReference type="SAM" id="MobiDB-lite"/>
    </source>
</evidence>
<evidence type="ECO:0000305" key="3"/>
<accession>A6ZLF7</accession>
<dbReference type="EMBL" id="AAFW02000011">
    <property type="protein sequence ID" value="EDN64826.1"/>
    <property type="molecule type" value="Genomic_DNA"/>
</dbReference>
<dbReference type="SMR" id="A6ZLF7"/>
<dbReference type="HOGENOM" id="CLU_106795_0_0_1"/>
<dbReference type="Proteomes" id="UP000007060">
    <property type="component" value="Unassembled WGS sequence"/>
</dbReference>
<dbReference type="GO" id="GO:0034274">
    <property type="term" value="C:Atg12-Atg5-Atg16 complex"/>
    <property type="evidence" value="ECO:0007669"/>
    <property type="project" value="TreeGrafter"/>
</dbReference>
<dbReference type="GO" id="GO:0000421">
    <property type="term" value="C:autophagosome membrane"/>
    <property type="evidence" value="ECO:0007669"/>
    <property type="project" value="TreeGrafter"/>
</dbReference>
<dbReference type="GO" id="GO:0034045">
    <property type="term" value="C:phagophore assembly site membrane"/>
    <property type="evidence" value="ECO:0007669"/>
    <property type="project" value="UniProtKB-SubCell"/>
</dbReference>
<dbReference type="GO" id="GO:0019776">
    <property type="term" value="F:Atg8-family ligase activity"/>
    <property type="evidence" value="ECO:0007669"/>
    <property type="project" value="TreeGrafter"/>
</dbReference>
<dbReference type="GO" id="GO:0000045">
    <property type="term" value="P:autophagosome assembly"/>
    <property type="evidence" value="ECO:0007669"/>
    <property type="project" value="InterPro"/>
</dbReference>
<dbReference type="GO" id="GO:0097352">
    <property type="term" value="P:autophagosome maturation"/>
    <property type="evidence" value="ECO:0007669"/>
    <property type="project" value="TreeGrafter"/>
</dbReference>
<dbReference type="GO" id="GO:0000422">
    <property type="term" value="P:autophagy of mitochondrion"/>
    <property type="evidence" value="ECO:0007669"/>
    <property type="project" value="TreeGrafter"/>
</dbReference>
<dbReference type="GO" id="GO:0061723">
    <property type="term" value="P:glycophagy"/>
    <property type="evidence" value="ECO:0007669"/>
    <property type="project" value="TreeGrafter"/>
</dbReference>
<dbReference type="GO" id="GO:0034727">
    <property type="term" value="P:piecemeal microautophagy of the nucleus"/>
    <property type="evidence" value="ECO:0007669"/>
    <property type="project" value="TreeGrafter"/>
</dbReference>
<dbReference type="GO" id="GO:0015031">
    <property type="term" value="P:protein transport"/>
    <property type="evidence" value="ECO:0007669"/>
    <property type="project" value="UniProtKB-KW"/>
</dbReference>
<dbReference type="CDD" id="cd01612">
    <property type="entry name" value="Ubl_ATG12"/>
    <property type="match status" value="1"/>
</dbReference>
<dbReference type="FunFam" id="3.10.20.90:FF:000333">
    <property type="entry name" value="Ubiquitin-like protein ATG12"/>
    <property type="match status" value="1"/>
</dbReference>
<dbReference type="Gene3D" id="3.10.20.90">
    <property type="entry name" value="Phosphatidylinositol 3-kinase Catalytic Subunit, Chain A, domain 1"/>
    <property type="match status" value="1"/>
</dbReference>
<dbReference type="InterPro" id="IPR007242">
    <property type="entry name" value="Atg12"/>
</dbReference>
<dbReference type="InterPro" id="IPR029071">
    <property type="entry name" value="Ubiquitin-like_domsf"/>
</dbReference>
<dbReference type="PANTHER" id="PTHR13385">
    <property type="entry name" value="AUTOPHAGY PROTEIN 12"/>
    <property type="match status" value="1"/>
</dbReference>
<dbReference type="PANTHER" id="PTHR13385:SF0">
    <property type="entry name" value="UBIQUITIN-LIKE PROTEIN ATG12"/>
    <property type="match status" value="1"/>
</dbReference>
<dbReference type="Pfam" id="PF04110">
    <property type="entry name" value="APG12"/>
    <property type="match status" value="1"/>
</dbReference>
<dbReference type="SUPFAM" id="SSF54236">
    <property type="entry name" value="Ubiquitin-like"/>
    <property type="match status" value="1"/>
</dbReference>
<comment type="function">
    <text evidence="1">Ubiquitin-like protein involved in cytoplasm to vacuole transport (Cvt), autophagy vesicles formation, mitophagy, and nucleophagy. Conjugation with ATG5 through a ubiquitin-like conjugating system involving also ATG7 as an E1-like activating enzyme and ATG10 as an E2-like conjugating enzyme, is essential for its function. The ATG12-ATG5 conjugate functions as an E3-like enzyme which is required for lipidation of ATG8 and ATG8 association to the vesicle membranes. ATG12-ATG5 rearranges the ATG3 catalytic center and enhances its E2 activity (By similarity).</text>
</comment>
<comment type="subunit">
    <text evidence="1">Forms a conjugate with ATG5. Forms a thioester bond with the 'Cys-133' of ATG10. Interacts with the ATG7 C-terminal 40 amino acids domain. The ATG12-ATG5 conjugate forms a complex with several units of ATG16. The ATG12-ATG5 conjugate also associates with ATG3. Interacts with COG2 (By similarity).</text>
</comment>
<comment type="subcellular location">
    <subcellularLocation>
        <location evidence="1">Preautophagosomal structure membrane</location>
        <topology evidence="1">Peripheral membrane protein</topology>
    </subcellularLocation>
    <text evidence="1">Localizes to the isolation membrane (IM), a membrane sac which is generated from the pre-autophagosomal structure (PAS) (By similarity). Ultimately, the IM expands to become a mature autophagosome. Localizes also to a dot at the junction between the IM and the vacuolar membrane, termed the vacuole-IM contact site (VICS) (By similarity).</text>
</comment>
<comment type="miscellaneous">
    <text evidence="1">Small amount of ATG5-ATG12 conjugate is enough to perform normal autophagy.</text>
</comment>
<comment type="similarity">
    <text evidence="3">Belongs to the ATG12 family.</text>
</comment>
<name>ATG12_YEAS7</name>
<protein>
    <recommendedName>
        <fullName>Ubiquitin-like protein ATG12</fullName>
    </recommendedName>
    <alternativeName>
        <fullName>Autophagy-related protein 12</fullName>
    </alternativeName>
</protein>
<proteinExistence type="inferred from homology"/>
<feature type="chain" id="PRO_0000317943" description="Ubiquitin-like protein ATG12">
    <location>
        <begin position="1"/>
        <end position="186"/>
    </location>
</feature>
<feature type="region of interest" description="Disordered" evidence="2">
    <location>
        <begin position="1"/>
        <end position="43"/>
    </location>
</feature>
<feature type="region of interest" description="Disordered" evidence="2">
    <location>
        <begin position="68"/>
        <end position="98"/>
    </location>
</feature>
<feature type="compositionally biased region" description="Polar residues" evidence="2">
    <location>
        <begin position="68"/>
        <end position="77"/>
    </location>
</feature>
<feature type="cross-link" description="Glycyl lysine isopeptide (Gly-Lys) (interchain with K-149 in ATG5)" evidence="1">
    <location>
        <position position="186"/>
    </location>
</feature>
<keyword id="KW-0072">Autophagy</keyword>
<keyword id="KW-1017">Isopeptide bond</keyword>
<keyword id="KW-0472">Membrane</keyword>
<keyword id="KW-0653">Protein transport</keyword>
<keyword id="KW-0813">Transport</keyword>
<keyword id="KW-0833">Ubl conjugation pathway</keyword>
<sequence length="186" mass="21106">MSRILESENETESDESSIISTNNGTAMERSRNNQELRSSPHTVQNRLELFSRRLSQLGLASDISVDQQVEDSSSGTYEQEETIKTNAQTSKQKSHKDEKNIQKIQIKFQPIGSIGQLKPSVCKISMSQSFAMVILFLKRRLKMDHVYCYINNSFAPSPQQNIGELWMQFKTNDELIVSYCASVAFG</sequence>